<gene>
    <name evidence="7" type="primary">cheR</name>
    <name type="ORF">CHGG_01237</name>
</gene>
<name>CHER_CHAGB</name>
<keyword id="KW-0238">DNA-binding</keyword>
<keyword id="KW-0479">Metal-binding</keyword>
<keyword id="KW-0539">Nucleus</keyword>
<keyword id="KW-1185">Reference proteome</keyword>
<keyword id="KW-0804">Transcription</keyword>
<keyword id="KW-0805">Transcription regulation</keyword>
<keyword id="KW-0862">Zinc</keyword>
<dbReference type="EMBL" id="CH408029">
    <property type="protein sequence ID" value="EAQ93002.1"/>
    <property type="molecule type" value="Genomic_DNA"/>
</dbReference>
<dbReference type="RefSeq" id="XP_001220458.1">
    <property type="nucleotide sequence ID" value="XM_001220457.1"/>
</dbReference>
<dbReference type="GeneID" id="4388309"/>
<dbReference type="VEuPathDB" id="FungiDB:CHGG_01237"/>
<dbReference type="eggNOG" id="ENOG502R9RH">
    <property type="taxonomic scope" value="Eukaryota"/>
</dbReference>
<dbReference type="HOGENOM" id="CLU_508053_0_0_1"/>
<dbReference type="InParanoid" id="Q2HEW7"/>
<dbReference type="OMA" id="RHKLRCE"/>
<dbReference type="OrthoDB" id="3434319at2759"/>
<dbReference type="Proteomes" id="UP000001056">
    <property type="component" value="Unassembled WGS sequence"/>
</dbReference>
<dbReference type="GO" id="GO:0005634">
    <property type="term" value="C:nucleus"/>
    <property type="evidence" value="ECO:0007669"/>
    <property type="project" value="UniProtKB-SubCell"/>
</dbReference>
<dbReference type="GO" id="GO:0003677">
    <property type="term" value="F:DNA binding"/>
    <property type="evidence" value="ECO:0007669"/>
    <property type="project" value="UniProtKB-KW"/>
</dbReference>
<dbReference type="GO" id="GO:0000981">
    <property type="term" value="F:DNA-binding transcription factor activity, RNA polymerase II-specific"/>
    <property type="evidence" value="ECO:0007669"/>
    <property type="project" value="InterPro"/>
</dbReference>
<dbReference type="GO" id="GO:0008270">
    <property type="term" value="F:zinc ion binding"/>
    <property type="evidence" value="ECO:0007669"/>
    <property type="project" value="InterPro"/>
</dbReference>
<dbReference type="CDD" id="cd00067">
    <property type="entry name" value="GAL4"/>
    <property type="match status" value="1"/>
</dbReference>
<dbReference type="Gene3D" id="4.10.240.10">
    <property type="entry name" value="Zn(2)-C6 fungal-type DNA-binding domain"/>
    <property type="match status" value="1"/>
</dbReference>
<dbReference type="InterPro" id="IPR036864">
    <property type="entry name" value="Zn2-C6_fun-type_DNA-bd_sf"/>
</dbReference>
<dbReference type="InterPro" id="IPR001138">
    <property type="entry name" value="Zn2Cys6_DnaBD"/>
</dbReference>
<dbReference type="SUPFAM" id="SSF57701">
    <property type="entry name" value="Zn2/Cys6 DNA-binding domain"/>
    <property type="match status" value="1"/>
</dbReference>
<dbReference type="PROSITE" id="PS50048">
    <property type="entry name" value="ZN2_CY6_FUNGAL_2"/>
    <property type="match status" value="1"/>
</dbReference>
<proteinExistence type="evidence at protein level"/>
<comment type="function">
    <text evidence="3 4">Transcription factor; part of the gene cluster that mediates the biosynthesis of chaetoglobosin A which has a unique inhibitory activity against actin polymerization in mammalian cells (PubMed:23611317, PubMed:33622536). Chaetoglobosin A and its intermediates are involved in the morphological differentiation of C.globosum (PubMed:33622536). Binds directly to asymmetric direct repeats present in the promoters of the chaetoglobosin A cluster genes (PubMed:33622536).</text>
</comment>
<comment type="subcellular location">
    <subcellularLocation>
        <location evidence="1">Nucleus</location>
    </subcellularLocation>
</comment>
<comment type="induction">
    <text evidence="5 6">Expression is regulated by the developmental and secondary metabolism regulators laeA and veA.</text>
</comment>
<comment type="disruption phenotype">
    <text evidence="4">Drastically reduces the transcription of chaetoglobosin A biosynthetic genes and completely abolishes chaetoglobosin A production (PubMed:33622536). Abolishes sporuration (PubMed:33622536).</text>
</comment>
<evidence type="ECO:0000255" key="1">
    <source>
        <dbReference type="PROSITE-ProRule" id="PRU00227"/>
    </source>
</evidence>
<evidence type="ECO:0000256" key="2">
    <source>
        <dbReference type="SAM" id="MobiDB-lite"/>
    </source>
</evidence>
<evidence type="ECO:0000269" key="3">
    <source>
    </source>
</evidence>
<evidence type="ECO:0000269" key="4">
    <source>
    </source>
</evidence>
<evidence type="ECO:0000269" key="5">
    <source>
    </source>
</evidence>
<evidence type="ECO:0000269" key="6">
    <source>
    </source>
</evidence>
<evidence type="ECO:0000303" key="7">
    <source>
    </source>
</evidence>
<accession>Q2HEW7</accession>
<sequence length="536" mass="57676">MASAEETFFSAARSRRLACDRCHRHKLRCERSSVIVNGGVAVPLGPCKRCLKACIPCQTVQTISGAFTAAKTGDTPVPRRSAREADQAASPAKRAPSPARRPTASTPRNVPGLIHDDTLSGTDTAPFEISVADAAMLDVSNFDFSGSEFIDLGSNGVLSSPTPIQSPPDHGSLIRDSEIRDRTPIPPHNQPPPRYDDFANDLSCFGTMAPKDDTISTLPALTDVEKASTGSSKSAPERGPREECSQRLLEIHGLLLNELQCITPADVTDALMFPENGSFSGRTRTGQGPGNTVVHRVLFTSERLIELLSIIRAADTAINGDKREAGIGPRNTSSFVDLPIVISILTCYVGLLSVYHAIFSHIYEALRVYEPLRAAKIRQRAWTRRGSVPGPKPGPGLVQPRAIYGADEAGGRPALNVLGIRIQLEIMTHMLEQIDSALFGPRVAHGADGDEGRTDTINRGGEVMFGHPATKALLATMLSHEGYDSGVPVGPFADGDGDDDDDDGYMEGMRGCRMGFRTLMGLQKNIRRLLRTNSFG</sequence>
<reference key="1">
    <citation type="journal article" date="2015" name="Genome Announc.">
        <title>Draft genome sequence of the cellulolytic fungus Chaetomium globosum.</title>
        <authorList>
            <person name="Cuomo C.A."/>
            <person name="Untereiner W.A."/>
            <person name="Ma L.-J."/>
            <person name="Grabherr M."/>
            <person name="Birren B.W."/>
        </authorList>
    </citation>
    <scope>NUCLEOTIDE SEQUENCE [LARGE SCALE GENOMIC DNA]</scope>
    <source>
        <strain>ATCC 6205 / CBS 148.51 / DSM 1962 / NBRC 6347 / NRRL 1970</strain>
    </source>
</reference>
<reference key="2">
    <citation type="journal article" date="2013" name="J. Am. Chem. Soc.">
        <title>Combinatorial generation of complexity by redox enzymes in the chaetoglobosin A biosynthesis.</title>
        <authorList>
            <person name="Ishiuchi K."/>
            <person name="Nakazawa T."/>
            <person name="Yagishita F."/>
            <person name="Mino T."/>
            <person name="Noguchi H."/>
            <person name="Hotta K."/>
            <person name="Watanabe K."/>
        </authorList>
    </citation>
    <scope>FUNCTION</scope>
</reference>
<reference key="3">
    <citation type="journal article" date="2021" name="Fungal Biol.">
        <title>Functional analysis of a chaetoglobosin A biosynthetic regulator in Chaetomium globosum.</title>
        <authorList>
            <person name="Cheng M."/>
            <person name="Zhao S."/>
            <person name="Liu H."/>
            <person name="Liu Y."/>
            <person name="Lin C."/>
            <person name="Song J."/>
            <person name="Thawai C."/>
            <person name="Charoensettasilp S."/>
            <person name="Yang Q."/>
        </authorList>
    </citation>
    <scope>FUNCTION</scope>
    <scope>DISRUPTION PHENOTYPE</scope>
    <scope>DNA-BINDING</scope>
</reference>
<reference key="4">
    <citation type="journal article" date="2021" name="Fungal Biol.">
        <title>Requirement of LaeA for sporulation, pigmentation and secondary metabolism in Chaetomium globosum.</title>
        <authorList>
            <person name="Cheng M."/>
            <person name="Zhao S."/>
            <person name="Lin C."/>
            <person name="Song J."/>
            <person name="Yang Q."/>
        </authorList>
    </citation>
    <scope>INDUCTION</scope>
</reference>
<reference key="5">
    <citation type="journal article" date="2022" name="Synth. Syst. Biotechnol.">
        <title>CgVeA, a light signaling responsive regulator, is involved in regulation of chaetoglobosin A biosynthesis and conidia development in Chaetomium globosum.</title>
        <authorList>
            <person name="Wang Z."/>
            <person name="Zhao S."/>
            <person name="Zhang K."/>
            <person name="Lin C."/>
            <person name="Ru X."/>
            <person name="Yang Q."/>
        </authorList>
    </citation>
    <scope>INDUCTION</scope>
</reference>
<organism>
    <name type="scientific">Chaetomium globosum (strain ATCC 6205 / CBS 148.51 / DSM 1962 / NBRC 6347 / NRRL 1970)</name>
    <name type="common">Soil fungus</name>
    <dbReference type="NCBI Taxonomy" id="306901"/>
    <lineage>
        <taxon>Eukaryota</taxon>
        <taxon>Fungi</taxon>
        <taxon>Dikarya</taxon>
        <taxon>Ascomycota</taxon>
        <taxon>Pezizomycotina</taxon>
        <taxon>Sordariomycetes</taxon>
        <taxon>Sordariomycetidae</taxon>
        <taxon>Sordariales</taxon>
        <taxon>Chaetomiaceae</taxon>
        <taxon>Chaetomium</taxon>
    </lineage>
</organism>
<feature type="chain" id="PRO_0000438204" description="Transcription factor cheR">
    <location>
        <begin position="1"/>
        <end position="536"/>
    </location>
</feature>
<feature type="DNA-binding region" description="Zn(2)-C6 fungal-type" evidence="1">
    <location>
        <begin position="19"/>
        <end position="57"/>
    </location>
</feature>
<feature type="region of interest" description="Disordered" evidence="2">
    <location>
        <begin position="70"/>
        <end position="122"/>
    </location>
</feature>
<feature type="region of interest" description="Disordered" evidence="2">
    <location>
        <begin position="220"/>
        <end position="243"/>
    </location>
</feature>
<feature type="compositionally biased region" description="Low complexity" evidence="2">
    <location>
        <begin position="88"/>
        <end position="108"/>
    </location>
</feature>
<protein>
    <recommendedName>
        <fullName evidence="7">Transcription factor cheR</fullName>
    </recommendedName>
    <alternativeName>
        <fullName evidence="7">Chaetoglobosin A biosynthesis cluster protein R</fullName>
    </alternativeName>
</protein>